<protein>
    <recommendedName>
        <fullName evidence="9">Hydroperoxide isomerase ALOXE3</fullName>
    </recommendedName>
    <alternativeName>
        <fullName evidence="8">Epidermis-type lipoxygenase 3</fullName>
        <shortName>Epidermal LOX-3</shortName>
        <shortName evidence="8">e-LOX-3</shortName>
        <shortName>eLOX-3</shortName>
    </alternativeName>
    <alternativeName>
        <fullName evidence="9">Hydroperoxy dehydratase ALOXE3</fullName>
    </alternativeName>
    <alternativeName>
        <fullName>Hydroperoxy icosatetraenoate dehydratase</fullName>
        <ecNumber evidence="5">4.2.1.152</ecNumber>
    </alternativeName>
    <alternativeName>
        <fullName>Hydroperoxy icosatetraenoate isomerase</fullName>
        <ecNumber evidence="5">5.4.4.7</ecNumber>
    </alternativeName>
</protein>
<accession>Q9WV07</accession>
<accession>B1ASX3</accession>
<evidence type="ECO:0000250" key="1">
    <source>
        <dbReference type="UniProtKB" id="D3ZKX9"/>
    </source>
</evidence>
<evidence type="ECO:0000250" key="2">
    <source>
        <dbReference type="UniProtKB" id="Q9BYJ1"/>
    </source>
</evidence>
<evidence type="ECO:0000255" key="3">
    <source>
        <dbReference type="PROSITE-ProRule" id="PRU00152"/>
    </source>
</evidence>
<evidence type="ECO:0000255" key="4">
    <source>
        <dbReference type="PROSITE-ProRule" id="PRU00726"/>
    </source>
</evidence>
<evidence type="ECO:0000269" key="5">
    <source>
    </source>
</evidence>
<evidence type="ECO:0000269" key="6">
    <source>
    </source>
</evidence>
<evidence type="ECO:0000269" key="7">
    <source>
    </source>
</evidence>
<evidence type="ECO:0000303" key="8">
    <source>
    </source>
</evidence>
<evidence type="ECO:0000305" key="9"/>
<evidence type="ECO:0000305" key="10">
    <source>
    </source>
</evidence>
<evidence type="ECO:0000312" key="11">
    <source>
        <dbReference type="MGI" id="MGI:1345140"/>
    </source>
</evidence>
<comment type="function">
    <text evidence="1 2 5 6 7">Non-heme iron-containing lipoxygenase which is atypical in that it displays a prominent hydroperoxide isomerase activity and a reduced lipoxygenases activity (PubMed:17045234). The hydroperoxide isomerase activity catalyzes the isomerization of hydroperoxides, derived from arachidonic and linoleic acid by ALOX12B, into hepoxilin-type epoxyalcohols and ketones (PubMed:17045234). In presence of oxygen, oxygenates polyunsaturated fatty acids, including arachidonic acid, to produce fatty acid hydroperoxides. In the skin, acts downstream of ALOX12B on the linoleate moiety of esterified omega-hydroxyacyl-sphingosine (EOS) ceramides to produce an epoxy-ketone derivative, a crucial step in the conjugation of omega-hydroxyceramide to membrane proteins (By similarity). Therefore plays a crucial role in the synthesis of corneocytes lipid envelope and the establishment of the skin barrier to water loss (PubMed:22832496). In parallel, it may have a signaling function in barrier formation through the production of hepoxilins metabolites (By similarity). Also plays a role in adipocyte differentiation through hepoxilin A3 and hepoxilin B3 production which in turn activate PPARG (PubMed:20530198). Through the production of hepoxilins in the spinal cord, it may regulate inflammatory tactile allodynia (By similarity).</text>
</comment>
<comment type="catalytic activity">
    <reaction evidence="5">
        <text>a hydroperoxyeicosatetraenoate = a hydroxy-epoxy-eicosatetraenoate</text>
        <dbReference type="Rhea" id="RHEA:55560"/>
        <dbReference type="ChEBI" id="CHEBI:59720"/>
        <dbReference type="ChEBI" id="CHEBI:137328"/>
        <dbReference type="EC" id="5.4.4.7"/>
    </reaction>
    <physiologicalReaction direction="left-to-right" evidence="10">
        <dbReference type="Rhea" id="RHEA:55561"/>
    </physiologicalReaction>
</comment>
<comment type="catalytic activity">
    <reaction evidence="5">
        <text>(8S)-hydroperoxy-(5Z,9E,11Z,14Z)-eicosatetraenoate = (10R)-hydroxy-(8S,9S)-epoxy-(5Z,11Z,14Z)-eicosatrienoate</text>
        <dbReference type="Rhea" id="RHEA:37931"/>
        <dbReference type="ChEBI" id="CHEBI:75322"/>
        <dbReference type="ChEBI" id="CHEBI:75327"/>
        <dbReference type="EC" id="5.4.4.7"/>
    </reaction>
    <physiologicalReaction direction="left-to-right" evidence="10">
        <dbReference type="Rhea" id="RHEA:37932"/>
    </physiologicalReaction>
</comment>
<comment type="catalytic activity">
    <reaction evidence="2">
        <text>(12R)-hydroperoxy-(5Z,8Z,10E,14Z)-eicosatetraenoate = (8R)-hydroxy-(11R,12R)-epoxy-(5Z,9E,14Z)-eicosatrienoate</text>
        <dbReference type="Rhea" id="RHEA:37939"/>
        <dbReference type="ChEBI" id="CHEBI:75230"/>
        <dbReference type="ChEBI" id="CHEBI:75232"/>
        <dbReference type="EC" id="5.4.4.7"/>
    </reaction>
    <physiologicalReaction direction="left-to-right" evidence="2">
        <dbReference type="Rhea" id="RHEA:37940"/>
    </physiologicalReaction>
</comment>
<comment type="catalytic activity">
    <reaction evidence="2">
        <text>(12S)-hydroperoxy-(5Z,8Z,10E,14Z)-eicosatetraenoate = (8R)-hydroxy-(11S,12S)-epoxy-(5Z,9E,14Z)-eicosatrienoate</text>
        <dbReference type="Rhea" id="RHEA:37955"/>
        <dbReference type="ChEBI" id="CHEBI:57444"/>
        <dbReference type="ChEBI" id="CHEBI:75233"/>
        <dbReference type="EC" id="5.4.4.7"/>
    </reaction>
    <physiologicalReaction direction="left-to-right" evidence="2">
        <dbReference type="Rhea" id="RHEA:37956"/>
    </physiologicalReaction>
</comment>
<comment type="catalytic activity">
    <reaction evidence="2">
        <text>(12S)-hydroperoxy-(5Z,8Z,10E,14Z)-eicosatetraenoate = (10R)-hydroxy-(11S,12S)-epoxy-(5Z,8Z,14Z)-eicosatrienoate</text>
        <dbReference type="Rhea" id="RHEA:37951"/>
        <dbReference type="ChEBI" id="CHEBI:57444"/>
        <dbReference type="ChEBI" id="CHEBI:75234"/>
        <dbReference type="EC" id="5.4.4.7"/>
    </reaction>
    <physiologicalReaction direction="left-to-right" evidence="2">
        <dbReference type="Rhea" id="RHEA:37952"/>
    </physiologicalReaction>
</comment>
<comment type="catalytic activity">
    <reaction evidence="2">
        <text>(15S)-hydroperoxy-(5Z,8Z,11Z,13E)-eicosatetraenoate = (13R)-hydroxy-(14S,15S)-epoxy-(5Z,8Z,11Z)-eicosatrienoate</text>
        <dbReference type="Rhea" id="RHEA:37959"/>
        <dbReference type="ChEBI" id="CHEBI:57446"/>
        <dbReference type="ChEBI" id="CHEBI:75235"/>
        <dbReference type="EC" id="5.4.4.7"/>
    </reaction>
    <physiologicalReaction direction="left-to-right" evidence="2">
        <dbReference type="Rhea" id="RHEA:37960"/>
    </physiologicalReaction>
</comment>
<comment type="catalytic activity">
    <reaction evidence="2">
        <text>(13S)-hydroperoxy-(9Z,11E)-octadecadienoate = 11-hydroxy-(12S,13S)-epoxy-(9Z)-octadecenoate</text>
        <dbReference type="Rhea" id="RHEA:50212"/>
        <dbReference type="ChEBI" id="CHEBI:57466"/>
        <dbReference type="ChEBI" id="CHEBI:132064"/>
    </reaction>
    <physiologicalReaction direction="left-to-right" evidence="2">
        <dbReference type="Rhea" id="RHEA:50213"/>
    </physiologicalReaction>
</comment>
<comment type="catalytic activity">
    <reaction evidence="5">
        <text>(5S)-hydroperoxy-(6E,8Z,11Z,14Z)-eicosatetraenoate = 7R-hydroxy-5S,6S-epoxy-(8Z,11Z,14Z)-eicosatrienoate</text>
        <dbReference type="Rhea" id="RHEA:41251"/>
        <dbReference type="ChEBI" id="CHEBI:57450"/>
        <dbReference type="ChEBI" id="CHEBI:77919"/>
    </reaction>
    <physiologicalReaction direction="left-to-right" evidence="10">
        <dbReference type="Rhea" id="RHEA:41252"/>
    </physiologicalReaction>
</comment>
<comment type="catalytic activity">
    <reaction evidence="2">
        <text>N-[omega-(9R)-hydroperoxy-(10E,12Z)-octadecadienoyloxy]acyl-beta-D-glucosyl-(1&lt;-&gt;1)-octadecasphing-4E-enine = a N-[omega-(9R,10R)-epoxy-(13R)-hydroxy-(11E)-octadecenoyloxy]acyl-beta-D-glucosyl-(1&lt;-&gt;1)-sphing-4E-enine</text>
        <dbReference type="Rhea" id="RHEA:40503"/>
        <dbReference type="ChEBI" id="CHEBI:134624"/>
        <dbReference type="ChEBI" id="CHEBI:134626"/>
    </reaction>
    <physiologicalReaction direction="left-to-right" evidence="2">
        <dbReference type="Rhea" id="RHEA:40504"/>
    </physiologicalReaction>
</comment>
<comment type="catalytic activity">
    <reaction evidence="2">
        <text>a N-[omega-(9R)-hydroperoxy-(10E,12Z)-octadecadienoyloxy]-acylsphin-4E-enine = a N-[omega-(9R,10R)-epoxy-(13R)-hydroxy-(11E)-octadecenoyloxy]-acylsphing-4E-enine</text>
        <dbReference type="Rhea" id="RHEA:41243"/>
        <dbReference type="ChEBI" id="CHEBI:77889"/>
        <dbReference type="ChEBI" id="CHEBI:77891"/>
    </reaction>
    <physiologicalReaction direction="left-to-right" evidence="2">
        <dbReference type="Rhea" id="RHEA:41244"/>
    </physiologicalReaction>
</comment>
<comment type="catalytic activity">
    <reaction evidence="5">
        <text>a hydroperoxyeicosatetraenoate = an oxoeicosatetraenoate + H2O</text>
        <dbReference type="Rhea" id="RHEA:55556"/>
        <dbReference type="ChEBI" id="CHEBI:15377"/>
        <dbReference type="ChEBI" id="CHEBI:59720"/>
        <dbReference type="ChEBI" id="CHEBI:131859"/>
        <dbReference type="EC" id="4.2.1.152"/>
    </reaction>
    <physiologicalReaction direction="left-to-right" evidence="10">
        <dbReference type="Rhea" id="RHEA:55557"/>
    </physiologicalReaction>
</comment>
<comment type="catalytic activity">
    <reaction evidence="5">
        <text>(8R)-hydroperoxy-(5Z,9E,11Z,14Z)-eicosatetraenoate = 8-oxo-(5Z,9E,11Z,14Z)-eicosatetraenoate + H2O</text>
        <dbReference type="Rhea" id="RHEA:37935"/>
        <dbReference type="ChEBI" id="CHEBI:15377"/>
        <dbReference type="ChEBI" id="CHEBI:57447"/>
        <dbReference type="ChEBI" id="CHEBI:75326"/>
        <dbReference type="EC" id="4.2.1.152"/>
    </reaction>
    <physiologicalReaction direction="left-to-right" evidence="10">
        <dbReference type="Rhea" id="RHEA:37936"/>
    </physiologicalReaction>
</comment>
<comment type="catalytic activity">
    <reaction evidence="5">
        <text>(8S)-hydroperoxy-(5Z,9E,11Z,14Z)-eicosatetraenoate = 8-oxo-(5Z,9E,11Z,14Z)-eicosatetraenoate + H2O</text>
        <dbReference type="Rhea" id="RHEA:37927"/>
        <dbReference type="ChEBI" id="CHEBI:15377"/>
        <dbReference type="ChEBI" id="CHEBI:75322"/>
        <dbReference type="ChEBI" id="CHEBI:75326"/>
        <dbReference type="EC" id="4.2.1.152"/>
    </reaction>
    <physiologicalReaction direction="left-to-right" evidence="10">
        <dbReference type="Rhea" id="RHEA:37928"/>
    </physiologicalReaction>
</comment>
<comment type="catalytic activity">
    <reaction evidence="2">
        <text>(12R)-hydroperoxy-(5Z,8Z,10E,14Z)-eicosatetraenoate = 12-oxo-(5Z,8Z,10E,14Z)-eicosatetraenoate + H2O</text>
        <dbReference type="Rhea" id="RHEA:37943"/>
        <dbReference type="ChEBI" id="CHEBI:15377"/>
        <dbReference type="ChEBI" id="CHEBI:75230"/>
        <dbReference type="ChEBI" id="CHEBI:75231"/>
        <dbReference type="EC" id="4.2.1.152"/>
    </reaction>
    <physiologicalReaction direction="left-to-right" evidence="2">
        <dbReference type="Rhea" id="RHEA:37944"/>
    </physiologicalReaction>
</comment>
<comment type="catalytic activity">
    <reaction evidence="2">
        <text>(12S)-hydroperoxy-(5Z,8Z,10E,14Z)-eicosatetraenoate = 12-oxo-(5Z,8Z,10E,14Z)-eicosatetraenoate + H2O</text>
        <dbReference type="Rhea" id="RHEA:37947"/>
        <dbReference type="ChEBI" id="CHEBI:15377"/>
        <dbReference type="ChEBI" id="CHEBI:57444"/>
        <dbReference type="ChEBI" id="CHEBI:75231"/>
        <dbReference type="EC" id="4.2.1.152"/>
    </reaction>
    <physiologicalReaction direction="left-to-right" evidence="2">
        <dbReference type="Rhea" id="RHEA:37948"/>
    </physiologicalReaction>
</comment>
<comment type="catalytic activity">
    <reaction evidence="2">
        <text>(15S)-hydroperoxy-(5Z,8Z,11Z,13E)-eicosatetraenoate = 15-oxo-(5Z,8Z,11Z,13E)-eicosatetraenoate + H2O</text>
        <dbReference type="Rhea" id="RHEA:48636"/>
        <dbReference type="ChEBI" id="CHEBI:15377"/>
        <dbReference type="ChEBI" id="CHEBI:57410"/>
        <dbReference type="ChEBI" id="CHEBI:57446"/>
    </reaction>
    <physiologicalReaction direction="left-to-right" evidence="2">
        <dbReference type="Rhea" id="RHEA:48637"/>
    </physiologicalReaction>
</comment>
<comment type="catalytic activity">
    <reaction evidence="2">
        <text>(13S)-hydroperoxy-(9Z,11E)-octadecadienoate = 13-oxo-(9Z,11E)-octadecadienoate + H2O</text>
        <dbReference type="Rhea" id="RHEA:48716"/>
        <dbReference type="ChEBI" id="CHEBI:15377"/>
        <dbReference type="ChEBI" id="CHEBI:57466"/>
        <dbReference type="ChEBI" id="CHEBI:90781"/>
    </reaction>
    <physiologicalReaction direction="left-to-right" evidence="2">
        <dbReference type="Rhea" id="RHEA:48717"/>
    </physiologicalReaction>
</comment>
<comment type="cofactor">
    <cofactor evidence="4">
        <name>Fe cation</name>
        <dbReference type="ChEBI" id="CHEBI:24875"/>
    </cofactor>
    <text evidence="4">Binds 1 Fe cation per subunit.</text>
</comment>
<comment type="pathway">
    <text evidence="5">Lipid metabolism; hydroperoxy eicosatetraenoic acid biosynthesis.</text>
</comment>
<comment type="pathway">
    <text evidence="2">Lipid metabolism; sphingolipid metabolism.</text>
</comment>
<comment type="subcellular location">
    <subcellularLocation>
        <location evidence="4">Cytoplasm</location>
    </subcellularLocation>
</comment>
<comment type="tissue specificity">
    <text>Skin specific.</text>
</comment>
<comment type="disruption phenotype">
    <text evidence="7">Mice die within 5 to 12 hours after birth due to defective skin barrier function loosing around 2.5% of body weight per hour. Dehydratation through the skin is increased 4 folds. The outside-in barrier acquisition is also affected, the skin remaining permeable at 18.5 dpc while it is impermeable in wild-type mice. The stratum corneum is more tightly packed while other layers are unaffected. Hyperkeratosis of the skin is observed but it is not associated with defects in epidermal differentiation while the ceramide composition of the epidermis is altered with an absence of ester-bound ceramides.</text>
</comment>
<comment type="similarity">
    <text evidence="9">Belongs to the lipoxygenase family.</text>
</comment>
<proteinExistence type="evidence at protein level"/>
<dbReference type="EC" id="4.2.1.152" evidence="5"/>
<dbReference type="EC" id="5.4.4.7" evidence="5"/>
<dbReference type="EMBL" id="Y14695">
    <property type="protein sequence ID" value="CAB46101.1"/>
    <property type="molecule type" value="mRNA"/>
</dbReference>
<dbReference type="EMBL" id="AL645527">
    <property type="status" value="NOT_ANNOTATED_CDS"/>
    <property type="molecule type" value="Genomic_DNA"/>
</dbReference>
<dbReference type="EMBL" id="CH466601">
    <property type="protein sequence ID" value="EDL10481.1"/>
    <property type="molecule type" value="Genomic_DNA"/>
</dbReference>
<dbReference type="CCDS" id="CCDS24884.1"/>
<dbReference type="RefSeq" id="NP_035916.2">
    <property type="nucleotide sequence ID" value="NM_011786.2"/>
</dbReference>
<dbReference type="SMR" id="Q9WV07"/>
<dbReference type="BioGRID" id="204721">
    <property type="interactions" value="1"/>
</dbReference>
<dbReference type="FunCoup" id="Q9WV07">
    <property type="interactions" value="129"/>
</dbReference>
<dbReference type="IntAct" id="Q9WV07">
    <property type="interactions" value="1"/>
</dbReference>
<dbReference type="STRING" id="10090.ENSMUSP00000021268"/>
<dbReference type="SwissLipids" id="SLP:000000661"/>
<dbReference type="iPTMnet" id="Q9WV07"/>
<dbReference type="PhosphoSitePlus" id="Q9WV07"/>
<dbReference type="PaxDb" id="10090-ENSMUSP00000021268"/>
<dbReference type="ProteomicsDB" id="291959"/>
<dbReference type="Antibodypedia" id="24534">
    <property type="antibodies" value="156 antibodies from 21 providers"/>
</dbReference>
<dbReference type="DNASU" id="23801"/>
<dbReference type="Ensembl" id="ENSMUST00000021268.9">
    <property type="protein sequence ID" value="ENSMUSP00000021268.3"/>
    <property type="gene ID" value="ENSMUSG00000020892.11"/>
</dbReference>
<dbReference type="GeneID" id="23801"/>
<dbReference type="KEGG" id="mmu:23801"/>
<dbReference type="UCSC" id="uc007jpj.2">
    <property type="organism name" value="mouse"/>
</dbReference>
<dbReference type="AGR" id="MGI:1345140"/>
<dbReference type="CTD" id="59344"/>
<dbReference type="MGI" id="MGI:1345140">
    <property type="gene designation" value="Aloxe3"/>
</dbReference>
<dbReference type="VEuPathDB" id="HostDB:ENSMUSG00000020892"/>
<dbReference type="eggNOG" id="ENOG502QQSP">
    <property type="taxonomic scope" value="Eukaryota"/>
</dbReference>
<dbReference type="GeneTree" id="ENSGT00940000156796"/>
<dbReference type="HOGENOM" id="CLU_004282_3_3_1"/>
<dbReference type="InParanoid" id="Q9WV07"/>
<dbReference type="OMA" id="DSPGNRY"/>
<dbReference type="OrthoDB" id="407298at2759"/>
<dbReference type="PhylomeDB" id="Q9WV07"/>
<dbReference type="TreeFam" id="TF105320"/>
<dbReference type="BRENDA" id="4.2.1.152">
    <property type="organism ID" value="3474"/>
</dbReference>
<dbReference type="BRENDA" id="5.4.4.7">
    <property type="organism ID" value="3474"/>
</dbReference>
<dbReference type="Reactome" id="R-MMU-2142712">
    <property type="pathway name" value="Synthesis of 12-eicosatetraenoic acid derivatives"/>
</dbReference>
<dbReference type="UniPathway" id="UPA00222"/>
<dbReference type="UniPathway" id="UPA00881"/>
<dbReference type="BioGRID-ORCS" id="23801">
    <property type="hits" value="4 hits in 82 CRISPR screens"/>
</dbReference>
<dbReference type="ChiTaRS" id="Aloxe3">
    <property type="organism name" value="mouse"/>
</dbReference>
<dbReference type="PRO" id="PR:Q9WV07"/>
<dbReference type="Proteomes" id="UP000000589">
    <property type="component" value="Chromosome 11"/>
</dbReference>
<dbReference type="RNAct" id="Q9WV07">
    <property type="molecule type" value="protein"/>
</dbReference>
<dbReference type="Bgee" id="ENSMUSG00000020892">
    <property type="expression patterns" value="Expressed in esophagus and 80 other cell types or tissues"/>
</dbReference>
<dbReference type="ExpressionAtlas" id="Q9WV07">
    <property type="expression patterns" value="baseline and differential"/>
</dbReference>
<dbReference type="GO" id="GO:0005737">
    <property type="term" value="C:cytoplasm"/>
    <property type="evidence" value="ECO:0007669"/>
    <property type="project" value="UniProtKB-SubCell"/>
</dbReference>
<dbReference type="GO" id="GO:0016020">
    <property type="term" value="C:membrane"/>
    <property type="evidence" value="ECO:0007669"/>
    <property type="project" value="GOC"/>
</dbReference>
<dbReference type="GO" id="GO:0106256">
    <property type="term" value="F:hydroperoxy icosatetraenoate dehydratase activity"/>
    <property type="evidence" value="ECO:0007669"/>
    <property type="project" value="UniProtKB-EC"/>
</dbReference>
<dbReference type="GO" id="GO:0106255">
    <property type="term" value="F:hydroperoxy icosatetraenoate isomerase activity"/>
    <property type="evidence" value="ECO:0000314"/>
    <property type="project" value="UniProtKB"/>
</dbReference>
<dbReference type="GO" id="GO:0050486">
    <property type="term" value="F:intramolecular hydroxytransferase activity"/>
    <property type="evidence" value="ECO:0000250"/>
    <property type="project" value="UniProtKB"/>
</dbReference>
<dbReference type="GO" id="GO:0005506">
    <property type="term" value="F:iron ion binding"/>
    <property type="evidence" value="ECO:0007669"/>
    <property type="project" value="InterPro"/>
</dbReference>
<dbReference type="GO" id="GO:0016702">
    <property type="term" value="F:oxidoreductase activity, acting on single donors with incorporation of molecular oxygen, incorporation of two atoms of oxygen"/>
    <property type="evidence" value="ECO:0000250"/>
    <property type="project" value="UniProtKB"/>
</dbReference>
<dbReference type="GO" id="GO:0019369">
    <property type="term" value="P:arachidonate metabolic process"/>
    <property type="evidence" value="ECO:0000314"/>
    <property type="project" value="UniProtKB"/>
</dbReference>
<dbReference type="GO" id="GO:0046513">
    <property type="term" value="P:ceramide biosynthetic process"/>
    <property type="evidence" value="ECO:0000315"/>
    <property type="project" value="UniProtKB"/>
</dbReference>
<dbReference type="GO" id="GO:0061436">
    <property type="term" value="P:establishment of skin barrier"/>
    <property type="evidence" value="ECO:0000315"/>
    <property type="project" value="UniProtKB"/>
</dbReference>
<dbReference type="GO" id="GO:0045444">
    <property type="term" value="P:fat cell differentiation"/>
    <property type="evidence" value="ECO:0000315"/>
    <property type="project" value="UniProtKB"/>
</dbReference>
<dbReference type="GO" id="GO:0051122">
    <property type="term" value="P:hepoxilin biosynthetic process"/>
    <property type="evidence" value="ECO:0000314"/>
    <property type="project" value="UniProtKB"/>
</dbReference>
<dbReference type="GO" id="GO:0043651">
    <property type="term" value="P:linoleic acid metabolic process"/>
    <property type="evidence" value="ECO:0000314"/>
    <property type="project" value="UniProtKB"/>
</dbReference>
<dbReference type="GO" id="GO:0034440">
    <property type="term" value="P:lipid oxidation"/>
    <property type="evidence" value="ECO:0007669"/>
    <property type="project" value="InterPro"/>
</dbReference>
<dbReference type="GO" id="GO:0019372">
    <property type="term" value="P:lipoxygenase pathway"/>
    <property type="evidence" value="ECO:0000250"/>
    <property type="project" value="UniProtKB"/>
</dbReference>
<dbReference type="GO" id="GO:0035357">
    <property type="term" value="P:peroxisome proliferator activated receptor signaling pathway"/>
    <property type="evidence" value="ECO:0000315"/>
    <property type="project" value="UniProtKB"/>
</dbReference>
<dbReference type="GO" id="GO:0019233">
    <property type="term" value="P:sensory perception of pain"/>
    <property type="evidence" value="ECO:0000250"/>
    <property type="project" value="UniProtKB"/>
</dbReference>
<dbReference type="GO" id="GO:0006665">
    <property type="term" value="P:sphingolipid metabolic process"/>
    <property type="evidence" value="ECO:0000250"/>
    <property type="project" value="UniProtKB"/>
</dbReference>
<dbReference type="CDD" id="cd01753">
    <property type="entry name" value="PLAT_LOX"/>
    <property type="match status" value="1"/>
</dbReference>
<dbReference type="FunFam" id="3.10.450.60:FF:000001">
    <property type="entry name" value="arachidonate 12-lipoxygenase, 12R-type"/>
    <property type="match status" value="1"/>
</dbReference>
<dbReference type="FunFam" id="1.20.245.10:FF:000001">
    <property type="entry name" value="Arachidonate 5-lipoxygenase a"/>
    <property type="match status" value="1"/>
</dbReference>
<dbReference type="FunFam" id="2.60.60.20:FF:000002">
    <property type="entry name" value="Arachidonate 5-lipoxygenase a"/>
    <property type="match status" value="1"/>
</dbReference>
<dbReference type="Gene3D" id="3.10.450.60">
    <property type="match status" value="1"/>
</dbReference>
<dbReference type="Gene3D" id="1.20.245.10">
    <property type="entry name" value="Lipoxygenase-1, Domain 5"/>
    <property type="match status" value="2"/>
</dbReference>
<dbReference type="Gene3D" id="2.60.60.20">
    <property type="entry name" value="PLAT/LH2 domain"/>
    <property type="match status" value="1"/>
</dbReference>
<dbReference type="InterPro" id="IPR000907">
    <property type="entry name" value="LipOase"/>
</dbReference>
<dbReference type="InterPro" id="IPR013819">
    <property type="entry name" value="LipOase_C"/>
</dbReference>
<dbReference type="InterPro" id="IPR036226">
    <property type="entry name" value="LipOase_C_sf"/>
</dbReference>
<dbReference type="InterPro" id="IPR020834">
    <property type="entry name" value="LipOase_CS"/>
</dbReference>
<dbReference type="InterPro" id="IPR020833">
    <property type="entry name" value="LipOase_Fe_BS"/>
</dbReference>
<dbReference type="InterPro" id="IPR001885">
    <property type="entry name" value="LipOase_mml"/>
</dbReference>
<dbReference type="InterPro" id="IPR001024">
    <property type="entry name" value="PLAT/LH2_dom"/>
</dbReference>
<dbReference type="InterPro" id="IPR036392">
    <property type="entry name" value="PLAT/LH2_dom_sf"/>
</dbReference>
<dbReference type="InterPro" id="IPR042062">
    <property type="entry name" value="PLAT_LOX_verte"/>
</dbReference>
<dbReference type="PANTHER" id="PTHR11771">
    <property type="entry name" value="LIPOXYGENASE"/>
    <property type="match status" value="1"/>
</dbReference>
<dbReference type="Pfam" id="PF00305">
    <property type="entry name" value="Lipoxygenase"/>
    <property type="match status" value="1"/>
</dbReference>
<dbReference type="Pfam" id="PF01477">
    <property type="entry name" value="PLAT"/>
    <property type="match status" value="1"/>
</dbReference>
<dbReference type="PRINTS" id="PR00087">
    <property type="entry name" value="LIPOXYGENASE"/>
</dbReference>
<dbReference type="PRINTS" id="PR00467">
    <property type="entry name" value="MAMLPOXGNASE"/>
</dbReference>
<dbReference type="SMART" id="SM00308">
    <property type="entry name" value="LH2"/>
    <property type="match status" value="1"/>
</dbReference>
<dbReference type="SUPFAM" id="SSF49723">
    <property type="entry name" value="Lipase/lipooxygenase domain (PLAT/LH2 domain)"/>
    <property type="match status" value="1"/>
</dbReference>
<dbReference type="SUPFAM" id="SSF48484">
    <property type="entry name" value="Lipoxigenase"/>
    <property type="match status" value="1"/>
</dbReference>
<dbReference type="PROSITE" id="PS00711">
    <property type="entry name" value="LIPOXYGENASE_1"/>
    <property type="match status" value="1"/>
</dbReference>
<dbReference type="PROSITE" id="PS00081">
    <property type="entry name" value="LIPOXYGENASE_2"/>
    <property type="match status" value="1"/>
</dbReference>
<dbReference type="PROSITE" id="PS51393">
    <property type="entry name" value="LIPOXYGENASE_3"/>
    <property type="match status" value="1"/>
</dbReference>
<dbReference type="PROSITE" id="PS50095">
    <property type="entry name" value="PLAT"/>
    <property type="match status" value="1"/>
</dbReference>
<organism>
    <name type="scientific">Mus musculus</name>
    <name type="common">Mouse</name>
    <dbReference type="NCBI Taxonomy" id="10090"/>
    <lineage>
        <taxon>Eukaryota</taxon>
        <taxon>Metazoa</taxon>
        <taxon>Chordata</taxon>
        <taxon>Craniata</taxon>
        <taxon>Vertebrata</taxon>
        <taxon>Euteleostomi</taxon>
        <taxon>Mammalia</taxon>
        <taxon>Eutheria</taxon>
        <taxon>Euarchontoglires</taxon>
        <taxon>Glires</taxon>
        <taxon>Rodentia</taxon>
        <taxon>Myomorpha</taxon>
        <taxon>Muroidea</taxon>
        <taxon>Muridae</taxon>
        <taxon>Murinae</taxon>
        <taxon>Mus</taxon>
        <taxon>Mus</taxon>
    </lineage>
</organism>
<name>LOXE3_MOUSE</name>
<feature type="chain" id="PRO_0000220692" description="Hydroperoxide isomerase ALOXE3">
    <location>
        <begin position="1"/>
        <end position="711"/>
    </location>
</feature>
<feature type="domain" description="PLAT" evidence="3">
    <location>
        <begin position="2"/>
        <end position="119"/>
    </location>
</feature>
<feature type="domain" description="Lipoxygenase" evidence="4">
    <location>
        <begin position="120"/>
        <end position="711"/>
    </location>
</feature>
<feature type="binding site" evidence="4">
    <location>
        <position position="408"/>
    </location>
    <ligand>
        <name>Fe cation</name>
        <dbReference type="ChEBI" id="CHEBI:24875"/>
        <note>catalytic</note>
    </ligand>
</feature>
<feature type="binding site" evidence="4">
    <location>
        <position position="413"/>
    </location>
    <ligand>
        <name>Fe cation</name>
        <dbReference type="ChEBI" id="CHEBI:24875"/>
        <note>catalytic</note>
    </ligand>
</feature>
<feature type="binding site" evidence="4">
    <location>
        <position position="588"/>
    </location>
    <ligand>
        <name>Fe cation</name>
        <dbReference type="ChEBI" id="CHEBI:24875"/>
        <note>catalytic</note>
    </ligand>
</feature>
<feature type="binding site" evidence="4">
    <location>
        <position position="592"/>
    </location>
    <ligand>
        <name>Fe cation</name>
        <dbReference type="ChEBI" id="CHEBI:24875"/>
        <note>catalytic</note>
    </ligand>
</feature>
<feature type="binding site" evidence="4">
    <location>
        <position position="711"/>
    </location>
    <ligand>
        <name>Fe cation</name>
        <dbReference type="ChEBI" id="CHEBI:24875"/>
        <note>catalytic</note>
    </ligand>
</feature>
<feature type="sequence conflict" description="In Ref. 1; CAB46101." evidence="9" ref="1">
    <original>Q</original>
    <variation>R</variation>
    <location>
        <position position="138"/>
    </location>
</feature>
<feature type="sequence conflict" description="In Ref. 1; CAB46101." evidence="9" ref="1">
    <original>G</original>
    <variation>S</variation>
    <location>
        <position position="341"/>
    </location>
</feature>
<feature type="sequence conflict" description="In Ref. 1; CAB46101." evidence="9" ref="1">
    <original>V</original>
    <variation>F</variation>
    <location>
        <position position="591"/>
    </location>
</feature>
<gene>
    <name evidence="11" type="primary">Aloxe3</name>
</gene>
<sequence length="711" mass="80473">MAVYRLCVTTGSYLKAGTLDNIYATLVGTCGESPKQKLDRVGRDFASGSVQKYKVRCEAELGEILLLRLHKERFAFFCKDPWYCSRICVTAPDGSAVHFPCYQWIDGYCTVELRPGTARTICQDSLPLLLDHRKRELQARQECYRWKIFAPGFPRMVDVSSFQEMESDKKFALTKTVPCAEQDDNSGNRYLPGFPMKIDIPSLLHMEPNIRYSATKTASLIFNALPASFGMKIRGLLDRKGSWKRLDDIRNIFWCHKTFTSEYVTEHWCEDSFFGYQYLNGVNPVMLHCLSSLPSKLPVTNDMVAPLLGPGTCLQTELERGHIFLADYWILAEAPVHCINGLQQYVTAPLCLLWLNPQGVLLPLAIQLSQTPGPESPIFLPTDCELDWLLAKTWVRNSEFLVHENNTHFLCTHLLCEAFSMATLRQLPLCHPVYKLLLPHTRYTLQVNTIARATLLNPDGLVDKVTSIGRQGLIYLMSTGLAHFTYTDFCLPDSIRARGVLTIPNYHYRDDGLKIWAAIERFVSEIVSYYYPSDASVQQDCELQAWVGEIFAQAFLGRESSGFPSRLCTPGELVKYLTAIIFNCSAQHAAVNSGQHDFGAWMPNAPSSMRQPPPQTKGDTTMKSYLDTLPEVNTTCRNLLLFWLVSQEPKDQRPLGTYPDEHFTEEAPRQSIAAFQNCLAQISKDIRERNQSLALPYAYLDPPLIENSVSI</sequence>
<keyword id="KW-0963">Cytoplasm</keyword>
<keyword id="KW-0223">Dioxygenase</keyword>
<keyword id="KW-0276">Fatty acid metabolism</keyword>
<keyword id="KW-0408">Iron</keyword>
<keyword id="KW-0413">Isomerase</keyword>
<keyword id="KW-0443">Lipid metabolism</keyword>
<keyword id="KW-0456">Lyase</keyword>
<keyword id="KW-0479">Metal-binding</keyword>
<keyword id="KW-0560">Oxidoreductase</keyword>
<keyword id="KW-1185">Reference proteome</keyword>
<reference key="1">
    <citation type="journal article" date="1999" name="Genomics">
        <title>cDNA cloning, genomic structure and chromosomal localization of a novel epidermis-type lipoxygenase.</title>
        <authorList>
            <person name="Kinzig A."/>
            <person name="Heidt M."/>
            <person name="Fuerstenberger G."/>
            <person name="Marks F."/>
            <person name="Krieg P."/>
        </authorList>
    </citation>
    <scope>NUCLEOTIDE SEQUENCE [MRNA]</scope>
    <source>
        <strain>NMRI</strain>
        <tissue>Skin</tissue>
    </source>
</reference>
<reference key="2">
    <citation type="journal article" date="2009" name="PLoS Biol.">
        <title>Lineage-specific biology revealed by a finished genome assembly of the mouse.</title>
        <authorList>
            <person name="Church D.M."/>
            <person name="Goodstadt L."/>
            <person name="Hillier L.W."/>
            <person name="Zody M.C."/>
            <person name="Goldstein S."/>
            <person name="She X."/>
            <person name="Bult C.J."/>
            <person name="Agarwala R."/>
            <person name="Cherry J.L."/>
            <person name="DiCuccio M."/>
            <person name="Hlavina W."/>
            <person name="Kapustin Y."/>
            <person name="Meric P."/>
            <person name="Maglott D."/>
            <person name="Birtle Z."/>
            <person name="Marques A.C."/>
            <person name="Graves T."/>
            <person name="Zhou S."/>
            <person name="Teague B."/>
            <person name="Potamousis K."/>
            <person name="Churas C."/>
            <person name="Place M."/>
            <person name="Herschleb J."/>
            <person name="Runnheim R."/>
            <person name="Forrest D."/>
            <person name="Amos-Landgraf J."/>
            <person name="Schwartz D.C."/>
            <person name="Cheng Z."/>
            <person name="Lindblad-Toh K."/>
            <person name="Eichler E.E."/>
            <person name="Ponting C.P."/>
        </authorList>
    </citation>
    <scope>NUCLEOTIDE SEQUENCE [LARGE SCALE GENOMIC DNA]</scope>
    <source>
        <strain>C57BL/6J</strain>
    </source>
</reference>
<reference key="3">
    <citation type="submission" date="2005-07" db="EMBL/GenBank/DDBJ databases">
        <authorList>
            <person name="Mural R.J."/>
            <person name="Adams M.D."/>
            <person name="Myers E.W."/>
            <person name="Smith H.O."/>
            <person name="Venter J.C."/>
        </authorList>
    </citation>
    <scope>NUCLEOTIDE SEQUENCE [LARGE SCALE GENOMIC DNA]</scope>
</reference>
<reference key="4">
    <citation type="journal article" date="2006" name="Arch. Biochem. Biophys.">
        <title>Human and mouse eLOX3 have distinct substrate specificities: implications for their linkage with lipoxygenases in skin.</title>
        <authorList>
            <person name="Yu Z."/>
            <person name="Schneider C."/>
            <person name="Boeglin W.E."/>
            <person name="Brash A.R."/>
        </authorList>
    </citation>
    <scope>FUNCTION AS A HYDROPEROXIDE ISOMERASE</scope>
    <scope>CATALYTIC ACTIVITY</scope>
</reference>
<reference key="5">
    <citation type="journal article" date="2010" name="Mol. Cell. Biol.">
        <title>Epidermis-type lipoxygenase 3 regulates adipocyte differentiation and peroxisome proliferator-activated receptor gamma activity.</title>
        <authorList>
            <person name="Hallenborg P."/>
            <person name="Joergensen C."/>
            <person name="Petersen R.K."/>
            <person name="Feddersen S."/>
            <person name="Araujo P."/>
            <person name="Markt P."/>
            <person name="Langer T."/>
            <person name="Furstenberger G."/>
            <person name="Krieg P."/>
            <person name="Koppen A."/>
            <person name="Kalkhoven E."/>
            <person name="Madsen L."/>
            <person name="Kristiansen K."/>
        </authorList>
    </citation>
    <scope>FUNCTION IN PPARG ACTIVATION</scope>
</reference>
<reference key="6">
    <citation type="journal article" date="2013" name="J. Invest. Dermatol.">
        <title>Aloxe3 knockout mice reveal a function of epidermal lipoxygenase-3 as hepoxilin synthase and its pivotal role in barrier formation.</title>
        <authorList>
            <person name="Krieg P."/>
            <person name="Rosenberger S."/>
            <person name="de Juanes S."/>
            <person name="Latzko S."/>
            <person name="Hou J."/>
            <person name="Dick A."/>
            <person name="Kloz U."/>
            <person name="van der Hoeven F."/>
            <person name="Hausser I."/>
            <person name="Esposito I."/>
            <person name="Rauh M."/>
            <person name="Schneider H."/>
        </authorList>
    </citation>
    <scope>FUNCTION IN SKIN BARRIER</scope>
    <scope>DISRUPTION PHENOTYPE</scope>
</reference>